<keyword id="KW-0183">Conidiation</keyword>
<keyword id="KW-0238">DNA-binding</keyword>
<keyword id="KW-0539">Nucleus</keyword>
<keyword id="KW-1185">Reference proteome</keyword>
<keyword id="KW-0749">Sporulation</keyword>
<keyword id="KW-0804">Transcription</keyword>
<keyword id="KW-0805">Transcription regulation</keyword>
<sequence>MNNGGPTEMYYQQHMQSAGQPQQPQTVTSGPMSHYPPAQPPLLQPGQPYSHGAPSPYQYGYANGMASPSGGPVPSNLPSNQPVLPLPGVGGQGAMPAHYSFDTTGQHPPPGMKPRVTATLWEDEGSLCFQVEARGICVARREDNHMINGTKLLNVAGMTRGRRDGILKSEKVRHVVKIGPMHLKGVWIPYERALDFANKEKITELLYPLFVHNIGALLYHPTNQTRTSQVMAAAERRKQDQGQMRTPPAGLPSIQHQPHNSMALPGPQSSLPSNNMARPPLDRAATFPTPPTTASSVMPNMGSTDNFNWQGQSMNGNQGTNAIAIDANLGHARSMPTTPATTPPGSMQPYGSAQSFDGSRQQMYNAPSQQSPYPASNGAHDRMYGQGNSYAKNDMGPPSSRPSGSAPSGEHEHKGSNGILPSEHGHQSHAGEEDGEHEQHDAEYTHDSGAYDSNRPSYNYTAPGVGSLAGDANNVDPSMTGSPNHPPASGRATPRTAAQPQPYYHNSGYGASPRVQQAPGFYNGVGGDRPAVNGGSGSDVYAPPADMANPMPNGYAPAPQVPNGVSGVKRGREGDDDLSRPVGDVPGMDMKRRKTLESSMPAPPFDSMSGRTAPTIGGDPRQR</sequence>
<name>STUA_HAPC1</name>
<organism>
    <name type="scientific">Hapsidospora chrysogenum (strain ATCC 11550 / CBS 779.69 / DSM 880 / IAM 14645 / JCM 23072 / IMI 49137)</name>
    <name type="common">Acremonium chrysogenum</name>
    <dbReference type="NCBI Taxonomy" id="857340"/>
    <lineage>
        <taxon>Eukaryota</taxon>
        <taxon>Fungi</taxon>
        <taxon>Dikarya</taxon>
        <taxon>Ascomycota</taxon>
        <taxon>Pezizomycotina</taxon>
        <taxon>Sordariomycetes</taxon>
        <taxon>Hypocreomycetidae</taxon>
        <taxon>Hypocreales</taxon>
        <taxon>Bionectriaceae</taxon>
        <taxon>Hapsidospora</taxon>
    </lineage>
</organism>
<reference key="1">
    <citation type="submission" date="2015-03" db="EMBL/GenBank/DDBJ databases">
        <title>Emergence of plasmid-mediated VIM-4 carbapenemase in Citrobacter freundii, co-harbouring armA, CTX-M-3, TEM-1 and QnrB at a cancer centre in Bulgaria.</title>
        <authorList>
            <person name="Sabtcheva S.D."/>
            <person name="Ivanov I.N."/>
        </authorList>
    </citation>
    <scope>NUCLEOTIDE SEQUENCE [MRNA]</scope>
</reference>
<reference key="2">
    <citation type="journal article" date="2014" name="Genome Announc.">
        <title>Genome sequence and annotation of Acremonium chrysogenum, producer of the beta-lactam antibiotic cephalosporin C.</title>
        <authorList>
            <person name="Terfehr D."/>
            <person name="Dahlmann T.A."/>
            <person name="Specht T."/>
            <person name="Zadra I."/>
            <person name="Kuernsteiner H."/>
            <person name="Kueck U."/>
        </authorList>
    </citation>
    <scope>NUCLEOTIDE SEQUENCE [LARGE SCALE GENOMIC DNA]</scope>
    <source>
        <strain>ATCC 11550 / CBS 779.69 / DSM 880 / IAM 14645 / JCM 23072 / IMI 49137</strain>
    </source>
</reference>
<reference key="3">
    <citation type="journal article" date="2015" name="Fungal Genet. Biol.">
        <title>AcstuA, which encodes an APSES transcription regulator, is involved in conidiation, cephalosporin biosynthesis and cell wall integrity of Acremonium chrysogenum.</title>
        <authorList>
            <person name="Hu P."/>
            <person name="Wang Y."/>
            <person name="Zhou J."/>
            <person name="Pan Y."/>
            <person name="Liu G."/>
        </authorList>
    </citation>
    <scope>DISRUPTION PHENOTYPE</scope>
    <scope>FUNCTION</scope>
    <scope>SUBCELLULAR LOCATION</scope>
</reference>
<protein>
    <recommendedName>
        <fullName evidence="6">Cell pattern formation-associated protein stuA</fullName>
    </recommendedName>
    <alternativeName>
        <fullName evidence="1">Stunted protein A</fullName>
    </alternativeName>
</protein>
<evidence type="ECO:0000250" key="1">
    <source>
        <dbReference type="UniProtKB" id="P36011"/>
    </source>
</evidence>
<evidence type="ECO:0000255" key="2">
    <source>
        <dbReference type="PROSITE-ProRule" id="PRU00630"/>
    </source>
</evidence>
<evidence type="ECO:0000256" key="3">
    <source>
        <dbReference type="SAM" id="MobiDB-lite"/>
    </source>
</evidence>
<evidence type="ECO:0000269" key="4">
    <source>
    </source>
</evidence>
<evidence type="ECO:0000303" key="5">
    <source>
    </source>
</evidence>
<evidence type="ECO:0000305" key="6"/>
<proteinExistence type="evidence at transcript level"/>
<dbReference type="EMBL" id="KP881734">
    <property type="protein sequence ID" value="AKR16194.1"/>
    <property type="molecule type" value="mRNA"/>
</dbReference>
<dbReference type="EMBL" id="JPKY01000026">
    <property type="protein sequence ID" value="KFH45829.1"/>
    <property type="molecule type" value="Genomic_DNA"/>
</dbReference>
<dbReference type="SMR" id="A0A0K0QSV4"/>
<dbReference type="STRING" id="857340.A0A0K0QSV4"/>
<dbReference type="OrthoDB" id="5407653at2759"/>
<dbReference type="Proteomes" id="UP000029964">
    <property type="component" value="Unassembled WGS sequence"/>
</dbReference>
<dbReference type="GO" id="GO:0005634">
    <property type="term" value="C:nucleus"/>
    <property type="evidence" value="ECO:0007669"/>
    <property type="project" value="UniProtKB-SubCell"/>
</dbReference>
<dbReference type="GO" id="GO:0003700">
    <property type="term" value="F:DNA-binding transcription factor activity"/>
    <property type="evidence" value="ECO:0007669"/>
    <property type="project" value="TreeGrafter"/>
</dbReference>
<dbReference type="GO" id="GO:0043565">
    <property type="term" value="F:sequence-specific DNA binding"/>
    <property type="evidence" value="ECO:0007669"/>
    <property type="project" value="TreeGrafter"/>
</dbReference>
<dbReference type="GO" id="GO:0048315">
    <property type="term" value="P:conidium formation"/>
    <property type="evidence" value="ECO:0007669"/>
    <property type="project" value="UniProtKB-KW"/>
</dbReference>
<dbReference type="GO" id="GO:0045944">
    <property type="term" value="P:positive regulation of transcription by RNA polymerase II"/>
    <property type="evidence" value="ECO:0007669"/>
    <property type="project" value="TreeGrafter"/>
</dbReference>
<dbReference type="GO" id="GO:0030435">
    <property type="term" value="P:sporulation resulting in formation of a cellular spore"/>
    <property type="evidence" value="ECO:0007669"/>
    <property type="project" value="UniProtKB-KW"/>
</dbReference>
<dbReference type="FunFam" id="3.10.260.10:FF:000003">
    <property type="entry name" value="Ascospore maturation 1 protein"/>
    <property type="match status" value="1"/>
</dbReference>
<dbReference type="Gene3D" id="3.10.260.10">
    <property type="entry name" value="Transcription regulator HTH, APSES-type DNA-binding domain"/>
    <property type="match status" value="1"/>
</dbReference>
<dbReference type="InterPro" id="IPR029790">
    <property type="entry name" value="EFG1/Phd1/StuA"/>
</dbReference>
<dbReference type="InterPro" id="IPR036887">
    <property type="entry name" value="HTH_APSES_sf"/>
</dbReference>
<dbReference type="InterPro" id="IPR018004">
    <property type="entry name" value="KilA/APSES_HTH"/>
</dbReference>
<dbReference type="InterPro" id="IPR003163">
    <property type="entry name" value="Tscrpt_reg_HTH_APSES-type"/>
</dbReference>
<dbReference type="PANTHER" id="PTHR47792">
    <property type="entry name" value="PROTEIN SOK2-RELATED"/>
    <property type="match status" value="1"/>
</dbReference>
<dbReference type="PANTHER" id="PTHR47792:SF1">
    <property type="entry name" value="PROTEIN SOK2-RELATED"/>
    <property type="match status" value="1"/>
</dbReference>
<dbReference type="Pfam" id="PF04383">
    <property type="entry name" value="KilA-N"/>
    <property type="match status" value="1"/>
</dbReference>
<dbReference type="SMART" id="SM01252">
    <property type="entry name" value="KilA-N"/>
    <property type="match status" value="1"/>
</dbReference>
<dbReference type="SUPFAM" id="SSF54616">
    <property type="entry name" value="DNA-binding domain of Mlu1-box binding protein MBP1"/>
    <property type="match status" value="1"/>
</dbReference>
<dbReference type="PROSITE" id="PS51299">
    <property type="entry name" value="HTH_APSES"/>
    <property type="match status" value="1"/>
</dbReference>
<accession>A0A0K0QSV4</accession>
<accession>A0A086T8Z7</accession>
<gene>
    <name evidence="5" type="primary">stuA</name>
    <name type="ORF">ACRE_033420</name>
</gene>
<feature type="chain" id="PRO_0000435969" description="Cell pattern formation-associated protein stuA">
    <location>
        <begin position="1"/>
        <end position="623"/>
    </location>
</feature>
<feature type="domain" description="HTH APSES-type" evidence="2">
    <location>
        <begin position="115"/>
        <end position="221"/>
    </location>
</feature>
<feature type="DNA-binding region" description="H-T-H motif" evidence="2">
    <location>
        <begin position="149"/>
        <end position="170"/>
    </location>
</feature>
<feature type="region of interest" description="Disordered" evidence="3">
    <location>
        <begin position="13"/>
        <end position="111"/>
    </location>
</feature>
<feature type="region of interest" description="Disordered" evidence="3">
    <location>
        <begin position="232"/>
        <end position="270"/>
    </location>
</feature>
<feature type="region of interest" description="Disordered" evidence="3">
    <location>
        <begin position="332"/>
        <end position="623"/>
    </location>
</feature>
<feature type="region of interest" description="Nuclear localization domain" evidence="1">
    <location>
        <begin position="569"/>
        <end position="594"/>
    </location>
</feature>
<feature type="compositionally biased region" description="Polar residues" evidence="3">
    <location>
        <begin position="13"/>
        <end position="31"/>
    </location>
</feature>
<feature type="compositionally biased region" description="Polar residues" evidence="3">
    <location>
        <begin position="335"/>
        <end position="374"/>
    </location>
</feature>
<feature type="compositionally biased region" description="Low complexity" evidence="3">
    <location>
        <begin position="396"/>
        <end position="408"/>
    </location>
</feature>
<feature type="compositionally biased region" description="Basic and acidic residues" evidence="3">
    <location>
        <begin position="423"/>
        <end position="446"/>
    </location>
</feature>
<feature type="compositionally biased region" description="Low complexity" evidence="3">
    <location>
        <begin position="542"/>
        <end position="553"/>
    </location>
</feature>
<feature type="compositionally biased region" description="Basic and acidic residues" evidence="3">
    <location>
        <begin position="570"/>
        <end position="579"/>
    </location>
</feature>
<comment type="function">
    <text evidence="1 4">Transcription factor that regulates asexual reproduction (PubMed:26283234). Binds the StuA-response elements (StRE) with the consensus sequence 5'-(A/T)CGCG(T/A)N(A/C)-3' at the promoters of target genes (By similarity). Controls conidiation by positively regulating the expression of brlA and abaA (PubMed:26283234). Positively regulates the cephalosporin biosynthesis gene cluster (PubMed:26283234). Also involved hyphal fragmentation and cell wall integrity (PubMed:26283234).</text>
</comment>
<comment type="subcellular location">
    <subcellularLocation>
        <location evidence="4">Nucleus</location>
    </subcellularLocation>
</comment>
<comment type="disruption phenotype">
    <text evidence="4">Blocks the conidiation through severely down-regulating the expression of brlA and abaA (PubMed:26283234). Drastically reduces cephalosporin production by decreasing expression of pcbAB, pbcC, cefD1, cefD2, cefEF and cefG (PubMed:26283234). Reduces also the expression of the mannoprotein encoding genes Acmp2 and Acmp3 and impairs cell wall integrity (PubMed:26283234).</text>
</comment>
<comment type="similarity">
    <text evidence="6">Belongs to the EFG1/PHD1/stuA family.</text>
</comment>